<proteinExistence type="inferred from homology"/>
<organism>
    <name type="scientific">Citrus sinensis</name>
    <name type="common">Sweet orange</name>
    <name type="synonym">Citrus aurantium var. sinensis</name>
    <dbReference type="NCBI Taxonomy" id="2711"/>
    <lineage>
        <taxon>Eukaryota</taxon>
        <taxon>Viridiplantae</taxon>
        <taxon>Streptophyta</taxon>
        <taxon>Embryophyta</taxon>
        <taxon>Tracheophyta</taxon>
        <taxon>Spermatophyta</taxon>
        <taxon>Magnoliopsida</taxon>
        <taxon>eudicotyledons</taxon>
        <taxon>Gunneridae</taxon>
        <taxon>Pentapetalae</taxon>
        <taxon>rosids</taxon>
        <taxon>malvids</taxon>
        <taxon>Sapindales</taxon>
        <taxon>Rutaceae</taxon>
        <taxon>Aurantioideae</taxon>
        <taxon>Citrus</taxon>
    </lineage>
</organism>
<sequence>MNPLISAASVIAAGLAVGLASIGPGVGQGTAAGQAVEGIARQPEAEGKIRGTLLLSLAFMEALTIYGLVVALALLFANPFV</sequence>
<name>ATPH_CITSI</name>
<dbReference type="EMBL" id="DQ864733">
    <property type="protein sequence ID" value="ABI49007.1"/>
    <property type="molecule type" value="Genomic_DNA"/>
</dbReference>
<dbReference type="RefSeq" id="YP_740462.1">
    <property type="nucleotide sequence ID" value="NC_008334.1"/>
</dbReference>
<dbReference type="SMR" id="Q09MJ1"/>
<dbReference type="GeneID" id="4271230"/>
<dbReference type="KEGG" id="cit:4271230"/>
<dbReference type="OrthoDB" id="909533at71240"/>
<dbReference type="GO" id="GO:0009535">
    <property type="term" value="C:chloroplast thylakoid membrane"/>
    <property type="evidence" value="ECO:0007669"/>
    <property type="project" value="UniProtKB-SubCell"/>
</dbReference>
<dbReference type="GO" id="GO:0045259">
    <property type="term" value="C:proton-transporting ATP synthase complex"/>
    <property type="evidence" value="ECO:0007669"/>
    <property type="project" value="UniProtKB-KW"/>
</dbReference>
<dbReference type="GO" id="GO:0033177">
    <property type="term" value="C:proton-transporting two-sector ATPase complex, proton-transporting domain"/>
    <property type="evidence" value="ECO:0007669"/>
    <property type="project" value="InterPro"/>
</dbReference>
<dbReference type="GO" id="GO:0008289">
    <property type="term" value="F:lipid binding"/>
    <property type="evidence" value="ECO:0007669"/>
    <property type="project" value="UniProtKB-KW"/>
</dbReference>
<dbReference type="GO" id="GO:0046933">
    <property type="term" value="F:proton-transporting ATP synthase activity, rotational mechanism"/>
    <property type="evidence" value="ECO:0007669"/>
    <property type="project" value="UniProtKB-UniRule"/>
</dbReference>
<dbReference type="CDD" id="cd18183">
    <property type="entry name" value="ATP-synt_Fo_c_ATPH"/>
    <property type="match status" value="1"/>
</dbReference>
<dbReference type="FunFam" id="1.20.20.10:FF:000001">
    <property type="entry name" value="ATP synthase subunit c, chloroplastic"/>
    <property type="match status" value="1"/>
</dbReference>
<dbReference type="Gene3D" id="1.20.20.10">
    <property type="entry name" value="F1F0 ATP synthase subunit C"/>
    <property type="match status" value="1"/>
</dbReference>
<dbReference type="HAMAP" id="MF_01396">
    <property type="entry name" value="ATP_synth_c_bact"/>
    <property type="match status" value="1"/>
</dbReference>
<dbReference type="InterPro" id="IPR005953">
    <property type="entry name" value="ATP_synth_csu_bac/chlpt"/>
</dbReference>
<dbReference type="InterPro" id="IPR000454">
    <property type="entry name" value="ATP_synth_F0_csu"/>
</dbReference>
<dbReference type="InterPro" id="IPR020537">
    <property type="entry name" value="ATP_synth_F0_csu_DDCD_BS"/>
</dbReference>
<dbReference type="InterPro" id="IPR038662">
    <property type="entry name" value="ATP_synth_F0_csu_sf"/>
</dbReference>
<dbReference type="InterPro" id="IPR002379">
    <property type="entry name" value="ATPase_proteolipid_c-like_dom"/>
</dbReference>
<dbReference type="InterPro" id="IPR035921">
    <property type="entry name" value="F/V-ATP_Csub_sf"/>
</dbReference>
<dbReference type="NCBIfam" id="TIGR01260">
    <property type="entry name" value="ATP_synt_c"/>
    <property type="match status" value="1"/>
</dbReference>
<dbReference type="NCBIfam" id="NF005608">
    <property type="entry name" value="PRK07354.1"/>
    <property type="match status" value="1"/>
</dbReference>
<dbReference type="PANTHER" id="PTHR10031">
    <property type="entry name" value="ATP SYNTHASE LIPID-BINDING PROTEIN, MITOCHONDRIAL"/>
    <property type="match status" value="1"/>
</dbReference>
<dbReference type="PANTHER" id="PTHR10031:SF0">
    <property type="entry name" value="ATPASE PROTEIN 9"/>
    <property type="match status" value="1"/>
</dbReference>
<dbReference type="Pfam" id="PF00137">
    <property type="entry name" value="ATP-synt_C"/>
    <property type="match status" value="1"/>
</dbReference>
<dbReference type="PRINTS" id="PR00124">
    <property type="entry name" value="ATPASEC"/>
</dbReference>
<dbReference type="SUPFAM" id="SSF81333">
    <property type="entry name" value="F1F0 ATP synthase subunit C"/>
    <property type="match status" value="1"/>
</dbReference>
<dbReference type="PROSITE" id="PS00605">
    <property type="entry name" value="ATPASE_C"/>
    <property type="match status" value="1"/>
</dbReference>
<evidence type="ECO:0000255" key="1">
    <source>
        <dbReference type="HAMAP-Rule" id="MF_01396"/>
    </source>
</evidence>
<comment type="function">
    <text evidence="1">F(1)F(0) ATP synthase produces ATP from ADP in the presence of a proton or sodium gradient. F-type ATPases consist of two structural domains, F(1) containing the extramembraneous catalytic core and F(0) containing the membrane proton channel, linked together by a central stalk and a peripheral stalk. During catalysis, ATP synthesis in the catalytic domain of F(1) is coupled via a rotary mechanism of the central stalk subunits to proton translocation.</text>
</comment>
<comment type="function">
    <text evidence="1">Key component of the F(0) channel; it plays a direct role in translocation across the membrane. A homomeric c-ring of between 10-14 subunits forms the central stalk rotor element with the F(1) delta and epsilon subunits.</text>
</comment>
<comment type="subunit">
    <text evidence="1">F-type ATPases have 2 components, F(1) - the catalytic core - and F(0) - the membrane proton channel. F(1) has five subunits: alpha(3), beta(3), gamma(1), delta(1), epsilon(1). F(0) has four main subunits: a(1), b(1), b'(1) and c(10-14). The alpha and beta chains form an alternating ring which encloses part of the gamma chain. F(1) is attached to F(0) by a central stalk formed by the gamma and epsilon chains, while a peripheral stalk is formed by the delta, b and b' chains.</text>
</comment>
<comment type="subcellular location">
    <subcellularLocation>
        <location evidence="1">Plastid</location>
        <location evidence="1">Chloroplast thylakoid membrane</location>
        <topology evidence="1">Multi-pass membrane protein</topology>
    </subcellularLocation>
</comment>
<comment type="miscellaneous">
    <text>In plastids the F-type ATPase is also known as CF(1)CF(0).</text>
</comment>
<comment type="similarity">
    <text evidence="1">Belongs to the ATPase C chain family.</text>
</comment>
<feature type="chain" id="PRO_0000362901" description="ATP synthase subunit c, chloroplastic">
    <location>
        <begin position="1"/>
        <end position="81"/>
    </location>
</feature>
<feature type="transmembrane region" description="Helical" evidence="1">
    <location>
        <begin position="3"/>
        <end position="23"/>
    </location>
</feature>
<feature type="transmembrane region" description="Helical" evidence="1">
    <location>
        <begin position="57"/>
        <end position="77"/>
    </location>
</feature>
<feature type="site" description="Reversibly protonated during proton transport" evidence="1">
    <location>
        <position position="61"/>
    </location>
</feature>
<protein>
    <recommendedName>
        <fullName evidence="1">ATP synthase subunit c, chloroplastic</fullName>
    </recommendedName>
    <alternativeName>
        <fullName evidence="1">ATP synthase F(0) sector subunit c</fullName>
    </alternativeName>
    <alternativeName>
        <fullName evidence="1">ATPase subunit III</fullName>
    </alternativeName>
    <alternativeName>
        <fullName evidence="1">F-type ATPase subunit c</fullName>
        <shortName evidence="1">F-ATPase subunit c</shortName>
    </alternativeName>
    <alternativeName>
        <fullName evidence="1">Lipid-binding protein</fullName>
    </alternativeName>
</protein>
<accession>Q09MJ1</accession>
<gene>
    <name evidence="1" type="primary">atpH</name>
</gene>
<reference key="1">
    <citation type="journal article" date="2006" name="BMC Plant Biol.">
        <title>The complete chloroplast genome sequence of Citrus sinensis (L.) Osbeck var 'Ridge Pineapple': organization and phylogenetic relationships to other angiosperms.</title>
        <authorList>
            <person name="Bausher M.G."/>
            <person name="Singh N.D."/>
            <person name="Lee S.-B."/>
            <person name="Jansen R.K."/>
            <person name="Daniell H."/>
        </authorList>
    </citation>
    <scope>NUCLEOTIDE SEQUENCE [LARGE SCALE GENOMIC DNA]</scope>
    <source>
        <strain>cv. Osbeck var. Ridge Pineapple</strain>
    </source>
</reference>
<geneLocation type="chloroplast"/>
<keyword id="KW-0066">ATP synthesis</keyword>
<keyword id="KW-0138">CF(0)</keyword>
<keyword id="KW-0150">Chloroplast</keyword>
<keyword id="KW-0375">Hydrogen ion transport</keyword>
<keyword id="KW-0406">Ion transport</keyword>
<keyword id="KW-0446">Lipid-binding</keyword>
<keyword id="KW-0472">Membrane</keyword>
<keyword id="KW-0934">Plastid</keyword>
<keyword id="KW-0793">Thylakoid</keyword>
<keyword id="KW-0812">Transmembrane</keyword>
<keyword id="KW-1133">Transmembrane helix</keyword>
<keyword id="KW-0813">Transport</keyword>